<feature type="chain" id="PRO_0000085206" description="Galactose-3-O-sulfotransferase 3">
    <location>
        <begin position="1"/>
        <end position="431"/>
    </location>
</feature>
<feature type="topological domain" description="Cytoplasmic" evidence="1">
    <location>
        <begin position="1"/>
        <end position="19"/>
    </location>
</feature>
<feature type="transmembrane region" description="Helical; Signal-anchor for type II membrane protein" evidence="1">
    <location>
        <begin position="20"/>
        <end position="40"/>
    </location>
</feature>
<feature type="topological domain" description="Lumenal" evidence="1">
    <location>
        <begin position="41"/>
        <end position="431"/>
    </location>
</feature>
<feature type="region of interest" description="Disordered" evidence="2">
    <location>
        <begin position="399"/>
        <end position="431"/>
    </location>
</feature>
<feature type="glycosylation site" description="N-linked (GlcNAc...) asparagine" evidence="1">
    <location>
        <position position="91"/>
    </location>
</feature>
<feature type="glycosylation site" description="N-linked (GlcNAc...) asparagine" evidence="1">
    <location>
        <position position="110"/>
    </location>
</feature>
<feature type="glycosylation site" description="N-linked (GlcNAc...) asparagine" evidence="1">
    <location>
        <position position="177"/>
    </location>
</feature>
<feature type="glycosylation site" description="N-linked (GlcNAc...) asparagine" evidence="1">
    <location>
        <position position="302"/>
    </location>
</feature>
<feature type="sequence variant" id="VAR_053988" description="In dbSNP:rs35285455.">
    <original>A</original>
    <variation>D</variation>
    <location>
        <position position="221"/>
    </location>
</feature>
<feature type="sequence variant" id="VAR_053989" description="In dbSNP:rs4565902.">
    <original>E</original>
    <variation>A</variation>
    <location>
        <position position="410"/>
    </location>
</feature>
<keyword id="KW-0325">Glycoprotein</keyword>
<keyword id="KW-0333">Golgi apparatus</keyword>
<keyword id="KW-0460">Magnesium</keyword>
<keyword id="KW-0472">Membrane</keyword>
<keyword id="KW-1267">Proteomics identification</keyword>
<keyword id="KW-1185">Reference proteome</keyword>
<keyword id="KW-0735">Signal-anchor</keyword>
<keyword id="KW-0808">Transferase</keyword>
<keyword id="KW-0812">Transmembrane</keyword>
<keyword id="KW-1133">Transmembrane helix</keyword>
<name>G3ST3_HUMAN</name>
<gene>
    <name type="primary">GAL3ST3</name>
</gene>
<protein>
    <recommendedName>
        <fullName>Galactose-3-O-sulfotransferase 3</fullName>
        <shortName>Gal3ST-3</shortName>
        <ecNumber>2.8.2.-</ecNumber>
    </recommendedName>
    <alternativeName>
        <fullName>Beta-galactose-3-O-sulfotransferase 3</fullName>
        <shortName>Gal3ST3</shortName>
    </alternativeName>
    <alternativeName>
        <fullName>Gal-beta-1, 3-GalNAc 3'-sulfotransferase 3</fullName>
    </alternativeName>
</protein>
<evidence type="ECO:0000255" key="1"/>
<evidence type="ECO:0000256" key="2">
    <source>
        <dbReference type="SAM" id="MobiDB-lite"/>
    </source>
</evidence>
<evidence type="ECO:0000269" key="3">
    <source>
    </source>
</evidence>
<evidence type="ECO:0000269" key="4">
    <source>
    </source>
</evidence>
<evidence type="ECO:0000305" key="5"/>
<proteinExistence type="evidence at protein level"/>
<organism>
    <name type="scientific">Homo sapiens</name>
    <name type="common">Human</name>
    <dbReference type="NCBI Taxonomy" id="9606"/>
    <lineage>
        <taxon>Eukaryota</taxon>
        <taxon>Metazoa</taxon>
        <taxon>Chordata</taxon>
        <taxon>Craniata</taxon>
        <taxon>Vertebrata</taxon>
        <taxon>Euteleostomi</taxon>
        <taxon>Mammalia</taxon>
        <taxon>Eutheria</taxon>
        <taxon>Euarchontoglires</taxon>
        <taxon>Primates</taxon>
        <taxon>Haplorrhini</taxon>
        <taxon>Catarrhini</taxon>
        <taxon>Hominidae</taxon>
        <taxon>Homo</taxon>
    </lineage>
</organism>
<dbReference type="EC" id="2.8.2.-"/>
<dbReference type="EMBL" id="AB053232">
    <property type="protein sequence ID" value="BAB61900.1"/>
    <property type="molecule type" value="mRNA"/>
</dbReference>
<dbReference type="EMBL" id="AY026481">
    <property type="protein sequence ID" value="AAK01945.1"/>
    <property type="molecule type" value="mRNA"/>
</dbReference>
<dbReference type="EMBL" id="BC113552">
    <property type="protein sequence ID" value="AAI13553.1"/>
    <property type="molecule type" value="mRNA"/>
</dbReference>
<dbReference type="EMBL" id="BC113554">
    <property type="protein sequence ID" value="AAI13555.1"/>
    <property type="molecule type" value="mRNA"/>
</dbReference>
<dbReference type="CCDS" id="CCDS8128.1"/>
<dbReference type="RefSeq" id="NP_149025.1">
    <property type="nucleotide sequence ID" value="NM_033036.3"/>
</dbReference>
<dbReference type="BioGRID" id="124603">
    <property type="interactions" value="1"/>
</dbReference>
<dbReference type="FunCoup" id="Q96A11">
    <property type="interactions" value="63"/>
</dbReference>
<dbReference type="IntAct" id="Q96A11">
    <property type="interactions" value="1"/>
</dbReference>
<dbReference type="STRING" id="9606.ENSP00000308591"/>
<dbReference type="GlyCosmos" id="Q96A11">
    <property type="glycosylation" value="4 sites, No reported glycans"/>
</dbReference>
<dbReference type="GlyGen" id="Q96A11">
    <property type="glycosylation" value="4 sites"/>
</dbReference>
<dbReference type="iPTMnet" id="Q96A11"/>
<dbReference type="PhosphoSitePlus" id="Q96A11"/>
<dbReference type="BioMuta" id="GAL3ST3"/>
<dbReference type="DMDM" id="47116425"/>
<dbReference type="jPOST" id="Q96A11"/>
<dbReference type="MassIVE" id="Q96A11"/>
<dbReference type="PaxDb" id="9606-ENSP00000308591"/>
<dbReference type="PeptideAtlas" id="Q96A11"/>
<dbReference type="ProteomicsDB" id="75891"/>
<dbReference type="Antibodypedia" id="2654">
    <property type="antibodies" value="44 antibodies from 15 providers"/>
</dbReference>
<dbReference type="DNASU" id="89792"/>
<dbReference type="Ensembl" id="ENST00000312006.5">
    <property type="protein sequence ID" value="ENSP00000308591.3"/>
    <property type="gene ID" value="ENSG00000175229.7"/>
</dbReference>
<dbReference type="Ensembl" id="ENST00000527878.1">
    <property type="protein sequence ID" value="ENSP00000434829.1"/>
    <property type="gene ID" value="ENSG00000175229.7"/>
</dbReference>
<dbReference type="GeneID" id="89792"/>
<dbReference type="KEGG" id="hsa:89792"/>
<dbReference type="MANE-Select" id="ENST00000312006.5">
    <property type="protein sequence ID" value="ENSP00000308591.3"/>
    <property type="RefSeq nucleotide sequence ID" value="NM_033036.3"/>
    <property type="RefSeq protein sequence ID" value="NP_149025.1"/>
</dbReference>
<dbReference type="UCSC" id="uc001ogv.4">
    <property type="organism name" value="human"/>
</dbReference>
<dbReference type="AGR" id="HGNC:24144"/>
<dbReference type="CTD" id="89792"/>
<dbReference type="DisGeNET" id="89792"/>
<dbReference type="GeneCards" id="GAL3ST3"/>
<dbReference type="HGNC" id="HGNC:24144">
    <property type="gene designation" value="GAL3ST3"/>
</dbReference>
<dbReference type="HPA" id="ENSG00000175229">
    <property type="expression patterns" value="Tissue enhanced (brain, thyroid gland)"/>
</dbReference>
<dbReference type="MIM" id="608234">
    <property type="type" value="gene"/>
</dbReference>
<dbReference type="neXtProt" id="NX_Q96A11"/>
<dbReference type="OpenTargets" id="ENSG00000175229"/>
<dbReference type="PharmGKB" id="PA134864180"/>
<dbReference type="VEuPathDB" id="HostDB:ENSG00000175229"/>
<dbReference type="eggNOG" id="ENOG502QPNT">
    <property type="taxonomic scope" value="Eukaryota"/>
</dbReference>
<dbReference type="GeneTree" id="ENSGT00950000182923"/>
<dbReference type="HOGENOM" id="CLU_040616_1_0_1"/>
<dbReference type="InParanoid" id="Q96A11"/>
<dbReference type="OMA" id="EEPWRYY"/>
<dbReference type="OrthoDB" id="514299at2759"/>
<dbReference type="PAN-GO" id="Q96A11">
    <property type="GO annotations" value="1 GO annotation based on evolutionary models"/>
</dbReference>
<dbReference type="PhylomeDB" id="Q96A11"/>
<dbReference type="TreeFam" id="TF314802"/>
<dbReference type="PathwayCommons" id="Q96A11"/>
<dbReference type="SignaLink" id="Q96A11"/>
<dbReference type="UniPathway" id="UPA00353"/>
<dbReference type="BioGRID-ORCS" id="89792">
    <property type="hits" value="14 hits in 1140 CRISPR screens"/>
</dbReference>
<dbReference type="GeneWiki" id="GAL3ST3"/>
<dbReference type="GenomeRNAi" id="89792"/>
<dbReference type="Pharos" id="Q96A11">
    <property type="development level" value="Tdark"/>
</dbReference>
<dbReference type="PRO" id="PR:Q96A11"/>
<dbReference type="Proteomes" id="UP000005640">
    <property type="component" value="Chromosome 11"/>
</dbReference>
<dbReference type="RNAct" id="Q96A11">
    <property type="molecule type" value="protein"/>
</dbReference>
<dbReference type="Bgee" id="ENSG00000175229">
    <property type="expression patterns" value="Expressed in primordial germ cell in gonad and 63 other cell types or tissues"/>
</dbReference>
<dbReference type="GO" id="GO:0032580">
    <property type="term" value="C:Golgi cisterna membrane"/>
    <property type="evidence" value="ECO:0007669"/>
    <property type="project" value="UniProtKB-SubCell"/>
</dbReference>
<dbReference type="GO" id="GO:0016020">
    <property type="term" value="C:membrane"/>
    <property type="evidence" value="ECO:0000303"/>
    <property type="project" value="UniProtKB"/>
</dbReference>
<dbReference type="GO" id="GO:0050656">
    <property type="term" value="F:3'-phosphoadenosine 5'-phosphosulfate binding"/>
    <property type="evidence" value="ECO:0000303"/>
    <property type="project" value="UniProtKB"/>
</dbReference>
<dbReference type="GO" id="GO:0030246">
    <property type="term" value="F:carbohydrate binding"/>
    <property type="evidence" value="ECO:0000303"/>
    <property type="project" value="UniProtKB"/>
</dbReference>
<dbReference type="GO" id="GO:0050694">
    <property type="term" value="F:galactose 3-O-sulfotransferase activity"/>
    <property type="evidence" value="ECO:0000314"/>
    <property type="project" value="UniProtKB"/>
</dbReference>
<dbReference type="GO" id="GO:0001733">
    <property type="term" value="F:galactosylceramide sulfotransferase activity"/>
    <property type="evidence" value="ECO:0007669"/>
    <property type="project" value="InterPro"/>
</dbReference>
<dbReference type="GO" id="GO:0050698">
    <property type="term" value="F:proteoglycan sulfotransferase activity"/>
    <property type="evidence" value="ECO:0000303"/>
    <property type="project" value="UniProtKB"/>
</dbReference>
<dbReference type="GO" id="GO:0009247">
    <property type="term" value="P:glycolipid biosynthetic process"/>
    <property type="evidence" value="ECO:0007669"/>
    <property type="project" value="InterPro"/>
</dbReference>
<dbReference type="GO" id="GO:0005996">
    <property type="term" value="P:monosaccharide metabolic process"/>
    <property type="evidence" value="ECO:0000303"/>
    <property type="project" value="UniProtKB"/>
</dbReference>
<dbReference type="GO" id="GO:0009311">
    <property type="term" value="P:oligosaccharide metabolic process"/>
    <property type="evidence" value="ECO:0000303"/>
    <property type="project" value="UniProtKB"/>
</dbReference>
<dbReference type="GO" id="GO:0030309">
    <property type="term" value="P:poly-N-acetyllactosamine metabolic process"/>
    <property type="evidence" value="ECO:0000303"/>
    <property type="project" value="UniProtKB"/>
</dbReference>
<dbReference type="GO" id="GO:0030166">
    <property type="term" value="P:proteoglycan biosynthetic process"/>
    <property type="evidence" value="ECO:0000303"/>
    <property type="project" value="UniProtKB"/>
</dbReference>
<dbReference type="GO" id="GO:0006790">
    <property type="term" value="P:sulfur compound metabolic process"/>
    <property type="evidence" value="ECO:0000303"/>
    <property type="project" value="UniProtKB"/>
</dbReference>
<dbReference type="FunFam" id="3.40.50.300:FF:001285">
    <property type="entry name" value="galactose-3-O-sulfotransferase 3"/>
    <property type="match status" value="1"/>
</dbReference>
<dbReference type="Gene3D" id="3.40.50.300">
    <property type="entry name" value="P-loop containing nucleotide triphosphate hydrolases"/>
    <property type="match status" value="1"/>
</dbReference>
<dbReference type="InterPro" id="IPR009729">
    <property type="entry name" value="Gal-3-0_sulfotransfrase"/>
</dbReference>
<dbReference type="InterPro" id="IPR027417">
    <property type="entry name" value="P-loop_NTPase"/>
</dbReference>
<dbReference type="PANTHER" id="PTHR14647">
    <property type="entry name" value="GALACTOSE-3-O-SULFOTRANSFERASE"/>
    <property type="match status" value="1"/>
</dbReference>
<dbReference type="PANTHER" id="PTHR14647:SF83">
    <property type="entry name" value="GALACTOSE-3-O-SULFOTRANSFERASE 3"/>
    <property type="match status" value="1"/>
</dbReference>
<dbReference type="Pfam" id="PF06990">
    <property type="entry name" value="Gal-3-0_sulfotr"/>
    <property type="match status" value="1"/>
</dbReference>
<dbReference type="SUPFAM" id="SSF52540">
    <property type="entry name" value="P-loop containing nucleoside triphosphate hydrolases"/>
    <property type="match status" value="1"/>
</dbReference>
<accession>Q96A11</accession>
<accession>Q14D05</accession>
<comment type="function">
    <text evidence="3 4">Transfers a sulfate to position 3 of non-reducing beta-galactosyl residues in N-glycans and core2-branched O-glycans. Has high activity towards Gal-beta-1,4-GlcNAc, Gal-beta-1,4(Fuc-alpha-1,3)GlcNAc and lower activity towards Gal-beta-1,3(Fuc-alpha-1,4)GlcNAc.</text>
</comment>
<comment type="cofactor">
    <cofactor>
        <name>Mg(2+)</name>
        <dbReference type="ChEBI" id="CHEBI:18420"/>
    </cofactor>
</comment>
<comment type="biophysicochemical properties">
    <phDependence>
        <text>Optimum pH is 7.0-8.0.</text>
    </phDependence>
</comment>
<comment type="pathway">
    <text>Protein modification; carbohydrate sulfation.</text>
</comment>
<comment type="interaction">
    <interactant intactId="EBI-17590461">
        <id>Q96A11</id>
    </interactant>
    <interactant intactId="EBI-17589229">
        <id>Q6NTF9-3</id>
        <label>RHBDD2</label>
    </interactant>
    <organismsDiffer>false</organismsDiffer>
    <experiments>3</experiments>
</comment>
<comment type="subcellular location">
    <subcellularLocation>
        <location evidence="5">Golgi apparatus</location>
        <location evidence="5">Golgi stack membrane</location>
        <topology evidence="5">Single-pass type II membrane protein</topology>
    </subcellularLocation>
</comment>
<comment type="tissue specificity">
    <text evidence="3 4">Highly expressed in thyroid, brain, kidney, heart and spinal cord.</text>
</comment>
<comment type="similarity">
    <text evidence="5">Belongs to the galactose-3-O-sulfotransferase family.</text>
</comment>
<reference key="1">
    <citation type="journal article" date="2001" name="J. Biol. Chem.">
        <title>A novel human Gal-3-O-sulfotransferase: molecular cloning, characterization, and its implications in biosynthesis of (SO4-3)Galbeta 1-4(Fucalpha 1-3)GlcNAc.</title>
        <authorList>
            <person name="El-Fasakhany F.M."/>
            <person name="Uchimura K."/>
            <person name="Kannagi R."/>
            <person name="Muramatsu T."/>
        </authorList>
    </citation>
    <scope>NUCLEOTIDE SEQUENCE [MRNA]</scope>
    <scope>FUNCTION</scope>
    <scope>TISSUE SPECIFICITY</scope>
    <source>
        <tissue>Fetal brain</tissue>
    </source>
</reference>
<reference key="2">
    <citation type="journal article" date="2001" name="J. Biol. Chem.">
        <title>Molecular cloning and expression of a novel human beta-Gal-3-O-sulfotransferase that acts preferentially on N-acetyllactosamine in N- and O-glycans.</title>
        <authorList>
            <person name="Suzuki A."/>
            <person name="Hiraoka N."/>
            <person name="Suzuki M."/>
            <person name="Angata K."/>
            <person name="Misra A.K."/>
            <person name="McAuliffe J."/>
            <person name="Hindsgaul O."/>
            <person name="Fukuda M."/>
        </authorList>
    </citation>
    <scope>NUCLEOTIDE SEQUENCE [MRNA]</scope>
    <scope>FUNCTION</scope>
    <scope>TISSUE SPECIFICITY</scope>
</reference>
<reference key="3">
    <citation type="journal article" date="2004" name="Genome Res.">
        <title>The status, quality, and expansion of the NIH full-length cDNA project: the Mammalian Gene Collection (MGC).</title>
        <authorList>
            <consortium name="The MGC Project Team"/>
        </authorList>
    </citation>
    <scope>NUCLEOTIDE SEQUENCE [LARGE SCALE MRNA]</scope>
    <source>
        <tissue>Brain</tissue>
    </source>
</reference>
<sequence>MPPILQRLQQATKMMSRRKILLLVLGCSTVSLLIHQGAQLSWYPKLFPLSCPPLRNSPPRPKHMTVAFLKTHKTAGTTVQNILFRFAERHNLTVALPHPSCEHQFCYPRNFSAHFVHPATRPPHVLASHLRFDRAELERLMPPSTVYVTILREPAAMFESLFSYYNQYCPAFRRVPNASLEAFLRAPEAYYRAGEHFAMFAHNTLAYDLGGDNERSPRDDAAYLAGLIRQVEEVFSLVMIAEYFDESLVLLRRLLAWDLDDVLYAKLNARAASSRLAAIPAALARAARTWNALDAGLYDHFNATFWRHVARAGRACVEREARELREARQRLLRRCFGDEPLLRPAAQIRTKQLQPWQPSRKVDIMGYDLPGGGAGPATEACLKLAMPEVQYSNYLLRKQKRRGGARARPEPVLDNPPPRPIRVLPRGPQGP</sequence>